<protein>
    <recommendedName>
        <fullName evidence="1">Imidazolonepropionase</fullName>
        <ecNumber evidence="1">3.5.2.7</ecNumber>
    </recommendedName>
    <alternativeName>
        <fullName evidence="1">Imidazolone-5-propionate hydrolase</fullName>
    </alternativeName>
</protein>
<name>HUTI_PSEE4</name>
<proteinExistence type="inferred from homology"/>
<evidence type="ECO:0000255" key="1">
    <source>
        <dbReference type="HAMAP-Rule" id="MF_00372"/>
    </source>
</evidence>
<feature type="chain" id="PRO_0000306487" description="Imidazolonepropionase">
    <location>
        <begin position="1"/>
        <end position="401"/>
    </location>
</feature>
<feature type="binding site" evidence="1">
    <location>
        <position position="66"/>
    </location>
    <ligand>
        <name>Fe(3+)</name>
        <dbReference type="ChEBI" id="CHEBI:29034"/>
    </ligand>
</feature>
<feature type="binding site" evidence="1">
    <location>
        <position position="66"/>
    </location>
    <ligand>
        <name>Zn(2+)</name>
        <dbReference type="ChEBI" id="CHEBI:29105"/>
    </ligand>
</feature>
<feature type="binding site" evidence="1">
    <location>
        <position position="68"/>
    </location>
    <ligand>
        <name>Fe(3+)</name>
        <dbReference type="ChEBI" id="CHEBI:29034"/>
    </ligand>
</feature>
<feature type="binding site" evidence="1">
    <location>
        <position position="68"/>
    </location>
    <ligand>
        <name>Zn(2+)</name>
        <dbReference type="ChEBI" id="CHEBI:29105"/>
    </ligand>
</feature>
<feature type="binding site" evidence="1">
    <location>
        <position position="75"/>
    </location>
    <ligand>
        <name>4-imidazolone-5-propanoate</name>
        <dbReference type="ChEBI" id="CHEBI:77893"/>
    </ligand>
</feature>
<feature type="binding site" evidence="1">
    <location>
        <position position="138"/>
    </location>
    <ligand>
        <name>4-imidazolone-5-propanoate</name>
        <dbReference type="ChEBI" id="CHEBI:77893"/>
    </ligand>
</feature>
<feature type="binding site" evidence="1">
    <location>
        <position position="138"/>
    </location>
    <ligand>
        <name>N-formimidoyl-L-glutamate</name>
        <dbReference type="ChEBI" id="CHEBI:58928"/>
    </ligand>
</feature>
<feature type="binding site" evidence="1">
    <location>
        <position position="171"/>
    </location>
    <ligand>
        <name>4-imidazolone-5-propanoate</name>
        <dbReference type="ChEBI" id="CHEBI:77893"/>
    </ligand>
</feature>
<feature type="binding site" evidence="1">
    <location>
        <position position="236"/>
    </location>
    <ligand>
        <name>Fe(3+)</name>
        <dbReference type="ChEBI" id="CHEBI:29034"/>
    </ligand>
</feature>
<feature type="binding site" evidence="1">
    <location>
        <position position="236"/>
    </location>
    <ligand>
        <name>Zn(2+)</name>
        <dbReference type="ChEBI" id="CHEBI:29105"/>
    </ligand>
</feature>
<feature type="binding site" evidence="1">
    <location>
        <position position="239"/>
    </location>
    <ligand>
        <name>4-imidazolone-5-propanoate</name>
        <dbReference type="ChEBI" id="CHEBI:77893"/>
    </ligand>
</feature>
<feature type="binding site" evidence="1">
    <location>
        <position position="311"/>
    </location>
    <ligand>
        <name>Fe(3+)</name>
        <dbReference type="ChEBI" id="CHEBI:29034"/>
    </ligand>
</feature>
<feature type="binding site" evidence="1">
    <location>
        <position position="311"/>
    </location>
    <ligand>
        <name>Zn(2+)</name>
        <dbReference type="ChEBI" id="CHEBI:29105"/>
    </ligand>
</feature>
<feature type="binding site" evidence="1">
    <location>
        <position position="313"/>
    </location>
    <ligand>
        <name>N-formimidoyl-L-glutamate</name>
        <dbReference type="ChEBI" id="CHEBI:58928"/>
    </ligand>
</feature>
<feature type="binding site" evidence="1">
    <location>
        <position position="315"/>
    </location>
    <ligand>
        <name>N-formimidoyl-L-glutamate</name>
        <dbReference type="ChEBI" id="CHEBI:58928"/>
    </ligand>
</feature>
<feature type="binding site" evidence="1">
    <location>
        <position position="316"/>
    </location>
    <ligand>
        <name>4-imidazolone-5-propanoate</name>
        <dbReference type="ChEBI" id="CHEBI:77893"/>
    </ligand>
</feature>
<keyword id="KW-0963">Cytoplasm</keyword>
<keyword id="KW-0369">Histidine metabolism</keyword>
<keyword id="KW-0378">Hydrolase</keyword>
<keyword id="KW-0408">Iron</keyword>
<keyword id="KW-0479">Metal-binding</keyword>
<keyword id="KW-0862">Zinc</keyword>
<organism>
    <name type="scientific">Pseudomonas entomophila (strain L48)</name>
    <dbReference type="NCBI Taxonomy" id="384676"/>
    <lineage>
        <taxon>Bacteria</taxon>
        <taxon>Pseudomonadati</taxon>
        <taxon>Pseudomonadota</taxon>
        <taxon>Gammaproteobacteria</taxon>
        <taxon>Pseudomonadales</taxon>
        <taxon>Pseudomonadaceae</taxon>
        <taxon>Pseudomonas</taxon>
    </lineage>
</organism>
<dbReference type="EC" id="3.5.2.7" evidence="1"/>
<dbReference type="EMBL" id="CT573326">
    <property type="protein sequence ID" value="CAK17725.1"/>
    <property type="molecule type" value="Genomic_DNA"/>
</dbReference>
<dbReference type="RefSeq" id="WP_011536085.1">
    <property type="nucleotide sequence ID" value="NC_008027.1"/>
</dbReference>
<dbReference type="SMR" id="Q1I3R1"/>
<dbReference type="STRING" id="384676.PSEEN5094"/>
<dbReference type="GeneID" id="32808030"/>
<dbReference type="KEGG" id="pen:PSEEN5094"/>
<dbReference type="eggNOG" id="COG1228">
    <property type="taxonomic scope" value="Bacteria"/>
</dbReference>
<dbReference type="HOGENOM" id="CLU_041647_0_0_6"/>
<dbReference type="OrthoDB" id="9776455at2"/>
<dbReference type="UniPathway" id="UPA00379">
    <property type="reaction ID" value="UER00551"/>
</dbReference>
<dbReference type="Proteomes" id="UP000000658">
    <property type="component" value="Chromosome"/>
</dbReference>
<dbReference type="GO" id="GO:0005737">
    <property type="term" value="C:cytoplasm"/>
    <property type="evidence" value="ECO:0007669"/>
    <property type="project" value="UniProtKB-SubCell"/>
</dbReference>
<dbReference type="GO" id="GO:0050480">
    <property type="term" value="F:imidazolonepropionase activity"/>
    <property type="evidence" value="ECO:0007669"/>
    <property type="project" value="UniProtKB-UniRule"/>
</dbReference>
<dbReference type="GO" id="GO:0005506">
    <property type="term" value="F:iron ion binding"/>
    <property type="evidence" value="ECO:0007669"/>
    <property type="project" value="UniProtKB-UniRule"/>
</dbReference>
<dbReference type="GO" id="GO:0008270">
    <property type="term" value="F:zinc ion binding"/>
    <property type="evidence" value="ECO:0007669"/>
    <property type="project" value="UniProtKB-UniRule"/>
</dbReference>
<dbReference type="GO" id="GO:0019556">
    <property type="term" value="P:L-histidine catabolic process to glutamate and formamide"/>
    <property type="evidence" value="ECO:0007669"/>
    <property type="project" value="UniProtKB-UniPathway"/>
</dbReference>
<dbReference type="GO" id="GO:0019557">
    <property type="term" value="P:L-histidine catabolic process to glutamate and formate"/>
    <property type="evidence" value="ECO:0007669"/>
    <property type="project" value="UniProtKB-UniPathway"/>
</dbReference>
<dbReference type="CDD" id="cd01296">
    <property type="entry name" value="Imidazolone-5PH"/>
    <property type="match status" value="1"/>
</dbReference>
<dbReference type="FunFam" id="3.20.20.140:FF:000007">
    <property type="entry name" value="Imidazolonepropionase"/>
    <property type="match status" value="1"/>
</dbReference>
<dbReference type="Gene3D" id="3.20.20.140">
    <property type="entry name" value="Metal-dependent hydrolases"/>
    <property type="match status" value="1"/>
</dbReference>
<dbReference type="Gene3D" id="2.30.40.10">
    <property type="entry name" value="Urease, subunit C, domain 1"/>
    <property type="match status" value="1"/>
</dbReference>
<dbReference type="HAMAP" id="MF_00372">
    <property type="entry name" value="HutI"/>
    <property type="match status" value="1"/>
</dbReference>
<dbReference type="InterPro" id="IPR006680">
    <property type="entry name" value="Amidohydro-rel"/>
</dbReference>
<dbReference type="InterPro" id="IPR005920">
    <property type="entry name" value="HutI"/>
</dbReference>
<dbReference type="InterPro" id="IPR011059">
    <property type="entry name" value="Metal-dep_hydrolase_composite"/>
</dbReference>
<dbReference type="InterPro" id="IPR032466">
    <property type="entry name" value="Metal_Hydrolase"/>
</dbReference>
<dbReference type="NCBIfam" id="TIGR01224">
    <property type="entry name" value="hutI"/>
    <property type="match status" value="1"/>
</dbReference>
<dbReference type="PANTHER" id="PTHR42752">
    <property type="entry name" value="IMIDAZOLONEPROPIONASE"/>
    <property type="match status" value="1"/>
</dbReference>
<dbReference type="PANTHER" id="PTHR42752:SF1">
    <property type="entry name" value="IMIDAZOLONEPROPIONASE-RELATED"/>
    <property type="match status" value="1"/>
</dbReference>
<dbReference type="Pfam" id="PF01979">
    <property type="entry name" value="Amidohydro_1"/>
    <property type="match status" value="1"/>
</dbReference>
<dbReference type="SUPFAM" id="SSF51338">
    <property type="entry name" value="Composite domain of metallo-dependent hydrolases"/>
    <property type="match status" value="1"/>
</dbReference>
<dbReference type="SUPFAM" id="SSF51556">
    <property type="entry name" value="Metallo-dependent hydrolases"/>
    <property type="match status" value="1"/>
</dbReference>
<gene>
    <name evidence="1" type="primary">hutI</name>
    <name type="ordered locus">PSEEN5094</name>
</gene>
<accession>Q1I3R1</accession>
<reference key="1">
    <citation type="journal article" date="2006" name="Nat. Biotechnol.">
        <title>Complete genome sequence of the entomopathogenic and metabolically versatile soil bacterium Pseudomonas entomophila.</title>
        <authorList>
            <person name="Vodovar N."/>
            <person name="Vallenet D."/>
            <person name="Cruveiller S."/>
            <person name="Rouy Z."/>
            <person name="Barbe V."/>
            <person name="Acosta C."/>
            <person name="Cattolico L."/>
            <person name="Jubin C."/>
            <person name="Lajus A."/>
            <person name="Segurens B."/>
            <person name="Vacherie B."/>
            <person name="Wincker P."/>
            <person name="Weissenbach J."/>
            <person name="Lemaitre B."/>
            <person name="Medigue C."/>
            <person name="Boccard F."/>
        </authorList>
    </citation>
    <scope>NUCLEOTIDE SEQUENCE [LARGE SCALE GENOMIC DNA]</scope>
    <source>
        <strain>L48</strain>
    </source>
</reference>
<comment type="function">
    <text evidence="1">Catalyzes the hydrolytic cleavage of the carbon-nitrogen bond in imidazolone-5-propanoate to yield N-formimidoyl-L-glutamate. It is the third step in the universal histidine degradation pathway.</text>
</comment>
<comment type="catalytic activity">
    <reaction evidence="1">
        <text>4-imidazolone-5-propanoate + H2O = N-formimidoyl-L-glutamate</text>
        <dbReference type="Rhea" id="RHEA:23660"/>
        <dbReference type="ChEBI" id="CHEBI:15377"/>
        <dbReference type="ChEBI" id="CHEBI:58928"/>
        <dbReference type="ChEBI" id="CHEBI:77893"/>
        <dbReference type="EC" id="3.5.2.7"/>
    </reaction>
</comment>
<comment type="cofactor">
    <cofactor evidence="1">
        <name>Zn(2+)</name>
        <dbReference type="ChEBI" id="CHEBI:29105"/>
    </cofactor>
    <cofactor evidence="1">
        <name>Fe(3+)</name>
        <dbReference type="ChEBI" id="CHEBI:29034"/>
    </cofactor>
    <text evidence="1">Binds 1 zinc or iron ion per subunit.</text>
</comment>
<comment type="pathway">
    <text evidence="1">Amino-acid degradation; L-histidine degradation into L-glutamate; N-formimidoyl-L-glutamate from L-histidine: step 3/3.</text>
</comment>
<comment type="subcellular location">
    <subcellularLocation>
        <location evidence="1">Cytoplasm</location>
    </subcellularLocation>
</comment>
<comment type="similarity">
    <text evidence="1">Belongs to the metallo-dependent hydrolases superfamily. HutI family.</text>
</comment>
<sequence length="401" mass="43126">MRTLWQHCHAATMTEGRYSVIEDAAIVTSAGLIEWIGPRGDVPPVTADRVVDLGGAWVTPGLIDCHTHAVFGGNRSGEFEQRLQGVSYAEIAAQGGGIASTVRATRAASEDALLASARQRVQALMRDGVTTIEIKSGYGLDLENERKMLRVARRLGEELPVTVRSTCLAAHALPPEYTGRADDYIDHICEQMLPALAAEGLVDAVDAFCEHLAFSPAQVERLFIKARGLGLPVKLHAEQLSSLHGSSLAARYQALSADHLEFMTEEDAIAMAKAGTVAVLLPGAFYFLRETQLPPMDALRRHGVKIALASDLNPGTSPGLSLRLMLNMGCTCFRMTPEEALAGVTLHAATALGLGHSHGSLEVGKVADFVAWRIERPADLSYWLGGDLPKRVVRLGHEISN</sequence>